<reference key="1">
    <citation type="journal article" date="2005" name="Gene">
        <title>The first complete chloroplast genome sequence of a lycophyte, Huperzia lucidula (Lycopodiaceae).</title>
        <authorList>
            <person name="Wolf P.G."/>
            <person name="Karol K.G."/>
            <person name="Mandoli D.F."/>
            <person name="Kuehl J.V."/>
            <person name="Arumuganathan K."/>
            <person name="Ellis M.W."/>
            <person name="Mishler B.D."/>
            <person name="Kelch D.G."/>
            <person name="Olmstead R.G."/>
            <person name="Boore J.L."/>
        </authorList>
    </citation>
    <scope>NUCLEOTIDE SEQUENCE [LARGE SCALE GENOMIC DNA]</scope>
</reference>
<feature type="chain" id="PRO_0000352120" description="Small ribosomal subunit protein uS2c">
    <location>
        <begin position="1"/>
        <end position="235"/>
    </location>
</feature>
<organism>
    <name type="scientific">Huperzia lucidula</name>
    <name type="common">Shining clubmoss</name>
    <name type="synonym">Lycopodium lucidulum</name>
    <dbReference type="NCBI Taxonomy" id="37429"/>
    <lineage>
        <taxon>Eukaryota</taxon>
        <taxon>Viridiplantae</taxon>
        <taxon>Streptophyta</taxon>
        <taxon>Embryophyta</taxon>
        <taxon>Tracheophyta</taxon>
        <taxon>Lycopodiopsida</taxon>
        <taxon>Lycopodiales</taxon>
        <taxon>Lycopodiaceae</taxon>
        <taxon>Huperzioideae</taxon>
        <taxon>Huperzia</taxon>
    </lineage>
</organism>
<dbReference type="EMBL" id="AY660566">
    <property type="protein sequence ID" value="AAT80744.1"/>
    <property type="molecule type" value="Genomic_DNA"/>
</dbReference>
<dbReference type="RefSeq" id="YP_209548.1">
    <property type="nucleotide sequence ID" value="NC_006861.1"/>
</dbReference>
<dbReference type="SMR" id="Q5SCY1"/>
<dbReference type="GeneID" id="3283747"/>
<dbReference type="GO" id="GO:0009507">
    <property type="term" value="C:chloroplast"/>
    <property type="evidence" value="ECO:0007669"/>
    <property type="project" value="UniProtKB-SubCell"/>
</dbReference>
<dbReference type="GO" id="GO:0005763">
    <property type="term" value="C:mitochondrial small ribosomal subunit"/>
    <property type="evidence" value="ECO:0007669"/>
    <property type="project" value="TreeGrafter"/>
</dbReference>
<dbReference type="GO" id="GO:0003735">
    <property type="term" value="F:structural constituent of ribosome"/>
    <property type="evidence" value="ECO:0007669"/>
    <property type="project" value="InterPro"/>
</dbReference>
<dbReference type="GO" id="GO:0006412">
    <property type="term" value="P:translation"/>
    <property type="evidence" value="ECO:0007669"/>
    <property type="project" value="UniProtKB-UniRule"/>
</dbReference>
<dbReference type="CDD" id="cd01425">
    <property type="entry name" value="RPS2"/>
    <property type="match status" value="1"/>
</dbReference>
<dbReference type="FunFam" id="1.10.287.610:FF:000001">
    <property type="entry name" value="30S ribosomal protein S2"/>
    <property type="match status" value="1"/>
</dbReference>
<dbReference type="Gene3D" id="3.40.50.10490">
    <property type="entry name" value="Glucose-6-phosphate isomerase like protein, domain 1"/>
    <property type="match status" value="1"/>
</dbReference>
<dbReference type="Gene3D" id="1.10.287.610">
    <property type="entry name" value="Helix hairpin bin"/>
    <property type="match status" value="1"/>
</dbReference>
<dbReference type="HAMAP" id="MF_00291_B">
    <property type="entry name" value="Ribosomal_uS2_B"/>
    <property type="match status" value="1"/>
</dbReference>
<dbReference type="InterPro" id="IPR001865">
    <property type="entry name" value="Ribosomal_uS2"/>
</dbReference>
<dbReference type="InterPro" id="IPR005706">
    <property type="entry name" value="Ribosomal_uS2_bac/mit/plastid"/>
</dbReference>
<dbReference type="InterPro" id="IPR023591">
    <property type="entry name" value="Ribosomal_uS2_flav_dom_sf"/>
</dbReference>
<dbReference type="NCBIfam" id="TIGR01011">
    <property type="entry name" value="rpsB_bact"/>
    <property type="match status" value="1"/>
</dbReference>
<dbReference type="PANTHER" id="PTHR12534">
    <property type="entry name" value="30S RIBOSOMAL PROTEIN S2 PROKARYOTIC AND ORGANELLAR"/>
    <property type="match status" value="1"/>
</dbReference>
<dbReference type="PANTHER" id="PTHR12534:SF0">
    <property type="entry name" value="SMALL RIBOSOMAL SUBUNIT PROTEIN US2M"/>
    <property type="match status" value="1"/>
</dbReference>
<dbReference type="Pfam" id="PF00318">
    <property type="entry name" value="Ribosomal_S2"/>
    <property type="match status" value="1"/>
</dbReference>
<dbReference type="PRINTS" id="PR00395">
    <property type="entry name" value="RIBOSOMALS2"/>
</dbReference>
<dbReference type="SUPFAM" id="SSF52313">
    <property type="entry name" value="Ribosomal protein S2"/>
    <property type="match status" value="1"/>
</dbReference>
<proteinExistence type="inferred from homology"/>
<geneLocation type="chloroplast"/>
<accession>Q5SCY1</accession>
<protein>
    <recommendedName>
        <fullName evidence="1">Small ribosomal subunit protein uS2c</fullName>
    </recommendedName>
    <alternativeName>
        <fullName>30S ribosomal protein S2, chloroplastic</fullName>
    </alternativeName>
</protein>
<evidence type="ECO:0000305" key="1"/>
<sequence>MEPKYWNINLEEMMEAGVHSGHQARKWNPKMAPYIFAERKGIHIINLTRTARFSSEACDSVANVASEGKQFSMVGTKYQAADLTASAAIKARCHYVNKKWLGGMLTNWSTMEKRLQKLRDLENKEKTGGFDRLPEKEAAISKGQLAKLKKYLGGIEYMASLPDVVTIVDQREESIAIKECITLNIPTICLVDTDCDPDLADIPIPANDDARASIRWISDKLASAICEGRKSYMKD</sequence>
<name>RR2_HUPLU</name>
<gene>
    <name type="primary">rps2</name>
</gene>
<keyword id="KW-0150">Chloroplast</keyword>
<keyword id="KW-0934">Plastid</keyword>
<keyword id="KW-0687">Ribonucleoprotein</keyword>
<keyword id="KW-0689">Ribosomal protein</keyword>
<comment type="subcellular location">
    <subcellularLocation>
        <location>Plastid</location>
        <location>Chloroplast</location>
    </subcellularLocation>
</comment>
<comment type="similarity">
    <text evidence="1">Belongs to the universal ribosomal protein uS2 family.</text>
</comment>